<feature type="chain" id="PRO_0000122406" description="Uncharacterized peptidase y4qF">
    <location>
        <begin position="1"/>
        <end position="754"/>
    </location>
</feature>
<feature type="region of interest" description="Disordered" evidence="2">
    <location>
        <begin position="733"/>
        <end position="754"/>
    </location>
</feature>
<feature type="active site" description="Charge relay system" evidence="1">
    <location>
        <position position="585"/>
    </location>
</feature>
<feature type="active site" description="Charge relay system" evidence="1">
    <location>
        <position position="707"/>
    </location>
</feature>
<geneLocation type="plasmid">
    <name>sym pNGR234a</name>
</geneLocation>
<comment type="similarity">
    <text evidence="3">Belongs to the peptidase S9A family.</text>
</comment>
<protein>
    <recommendedName>
        <fullName>Uncharacterized peptidase y4qF</fullName>
        <ecNumber>3.4.21.-</ecNumber>
    </recommendedName>
</protein>
<dbReference type="EC" id="3.4.21.-"/>
<dbReference type="EMBL" id="U00090">
    <property type="protein sequence ID" value="AAB91830.1"/>
    <property type="molecule type" value="Genomic_DNA"/>
</dbReference>
<dbReference type="RefSeq" id="NP_444033.1">
    <property type="nucleotide sequence ID" value="NC_000914.2"/>
</dbReference>
<dbReference type="SMR" id="P55627"/>
<dbReference type="ESTHER" id="rhisn-y4qf">
    <property type="family name" value="S9N_PREPL_Peptidase_S9"/>
</dbReference>
<dbReference type="KEGG" id="rhi:NGR_a01920"/>
<dbReference type="PATRIC" id="fig|394.7.peg.191"/>
<dbReference type="eggNOG" id="COG1770">
    <property type="taxonomic scope" value="Bacteria"/>
</dbReference>
<dbReference type="HOGENOM" id="CLU_011290_0_1_5"/>
<dbReference type="OrthoDB" id="9801421at2"/>
<dbReference type="Proteomes" id="UP000001054">
    <property type="component" value="Plasmid pNGR234a"/>
</dbReference>
<dbReference type="GO" id="GO:0004252">
    <property type="term" value="F:serine-type endopeptidase activity"/>
    <property type="evidence" value="ECO:0007669"/>
    <property type="project" value="InterPro"/>
</dbReference>
<dbReference type="GO" id="GO:0006508">
    <property type="term" value="P:proteolysis"/>
    <property type="evidence" value="ECO:0007669"/>
    <property type="project" value="UniProtKB-KW"/>
</dbReference>
<dbReference type="Gene3D" id="3.40.50.1820">
    <property type="entry name" value="alpha/beta hydrolase"/>
    <property type="match status" value="1"/>
</dbReference>
<dbReference type="Gene3D" id="2.130.10.120">
    <property type="entry name" value="Prolyl oligopeptidase, N-terminal domain"/>
    <property type="match status" value="1"/>
</dbReference>
<dbReference type="InterPro" id="IPR029058">
    <property type="entry name" value="AB_hydrolase_fold"/>
</dbReference>
<dbReference type="InterPro" id="IPR023302">
    <property type="entry name" value="Pept_S9A_N"/>
</dbReference>
<dbReference type="InterPro" id="IPR001375">
    <property type="entry name" value="Peptidase_S9_cat"/>
</dbReference>
<dbReference type="InterPro" id="IPR002470">
    <property type="entry name" value="Peptidase_S9A"/>
</dbReference>
<dbReference type="InterPro" id="IPR051543">
    <property type="entry name" value="Serine_Peptidase_S9A"/>
</dbReference>
<dbReference type="PANTHER" id="PTHR11757:SF19">
    <property type="entry name" value="PROLYL ENDOPEPTIDASE-LIKE"/>
    <property type="match status" value="1"/>
</dbReference>
<dbReference type="PANTHER" id="PTHR11757">
    <property type="entry name" value="PROTEASE FAMILY S9A OLIGOPEPTIDASE"/>
    <property type="match status" value="1"/>
</dbReference>
<dbReference type="Pfam" id="PF00326">
    <property type="entry name" value="Peptidase_S9"/>
    <property type="match status" value="1"/>
</dbReference>
<dbReference type="Pfam" id="PF02897">
    <property type="entry name" value="Peptidase_S9_N"/>
    <property type="match status" value="1"/>
</dbReference>
<dbReference type="PRINTS" id="PR00862">
    <property type="entry name" value="PROLIGOPTASE"/>
</dbReference>
<dbReference type="SUPFAM" id="SSF53474">
    <property type="entry name" value="alpha/beta-Hydrolases"/>
    <property type="match status" value="1"/>
</dbReference>
<dbReference type="SUPFAM" id="SSF50993">
    <property type="entry name" value="Peptidase/esterase 'gauge' domain"/>
    <property type="match status" value="1"/>
</dbReference>
<reference key="1">
    <citation type="journal article" date="1997" name="Nature">
        <title>Molecular basis of symbiosis between Rhizobium and legumes.</title>
        <authorList>
            <person name="Freiberg C.A."/>
            <person name="Fellay R."/>
            <person name="Bairoch A."/>
            <person name="Broughton W.J."/>
            <person name="Rosenthal A."/>
            <person name="Perret X."/>
        </authorList>
    </citation>
    <scope>NUCLEOTIDE SEQUENCE [LARGE SCALE GENOMIC DNA]</scope>
    <source>
        <strain>NBRC 101917 / NGR234</strain>
    </source>
</reference>
<reference key="2">
    <citation type="journal article" date="2009" name="Appl. Environ. Microbiol.">
        <title>Rhizobium sp. strain NGR234 possesses a remarkable number of secretion systems.</title>
        <authorList>
            <person name="Schmeisser C."/>
            <person name="Liesegang H."/>
            <person name="Krysciak D."/>
            <person name="Bakkou N."/>
            <person name="Le Quere A."/>
            <person name="Wollherr A."/>
            <person name="Heinemeyer I."/>
            <person name="Morgenstern B."/>
            <person name="Pommerening-Roeser A."/>
            <person name="Flores M."/>
            <person name="Palacios R."/>
            <person name="Brenner S."/>
            <person name="Gottschalk G."/>
            <person name="Schmitz R.A."/>
            <person name="Broughton W.J."/>
            <person name="Perret X."/>
            <person name="Strittmatter A.W."/>
            <person name="Streit W.R."/>
        </authorList>
    </citation>
    <scope>NUCLEOTIDE SEQUENCE [LARGE SCALE GENOMIC DNA]</scope>
    <source>
        <strain>NBRC 101917 / NGR234</strain>
    </source>
</reference>
<keyword id="KW-0378">Hydrolase</keyword>
<keyword id="KW-0614">Plasmid</keyword>
<keyword id="KW-0645">Protease</keyword>
<keyword id="KW-1185">Reference proteome</keyword>
<keyword id="KW-0720">Serine protease</keyword>
<proteinExistence type="inferred from homology"/>
<name>Y4QF_SINFN</name>
<evidence type="ECO:0000250" key="1"/>
<evidence type="ECO:0000256" key="2">
    <source>
        <dbReference type="SAM" id="MobiDB-lite"/>
    </source>
</evidence>
<evidence type="ECO:0000305" key="3"/>
<sequence>MGGLSAMQRRIDLLVEGGDEYDACSHFRSVVMWDKSLRPPLPRAEPRIRVLHDDVTVDRYGWLRDRENPDVRAYLEAENSYAEQATAHLRRLKTELIAEIEGRQPCEGATPPFQVGPFDYFQGHERGLPHPVWWRRPVTGGSAELVLDPNAIPGADVFYWLGVFEPSDDGRYLAFSVDLIGAERYELRVRDMSDGRDVWRDAGSVGQVVWAADNHTLFFTRERPDRRQHHQIVRLNVGRGNSEVVFEEANERLAVLVRRSQSGAWLFLDVLTTSDMSSYVQRGAAEVWCLPADEPGGQWRRIVMRELGHQIYAEHWYDRFLFRVDDAGPYWRLVSAPIDDPSPSRWEEVVPHRAGVTIDEIHVLEQHLVLLEREGLRPRLISRNRSGRVGAVIVPDEPSCTIRVGLSAGGCYSAARHPFRSSKLTYSVSSFVTPDTFIEHDFANDRSVVLCEARVPGYDATQYLATVVMAEAEDGVQVPISLVARRDRTSPGPVLLSVYGCYGIPRLPSFLAWPSSMTARLSLLDREVAFGIVHVRGGGELGRPWHDAATRDQKRITHTDLISATEGLIERGFATRDGVVIEGKSGGGGTVLATAVFRPNLFRAVVAEVPLADIIDTQLDSTMPYTLKETAEYGDPQDAYEYRYLRSYDPYYNLSPERSLPPTYVDAALDDGQVIYYQPARYVAQRRSCATDRDPDLVFRIRMVGGHSGPSHGPGIAEQAAFRMAWVLDQLRSHAPPPSRKARSAARRSTDPVR</sequence>
<gene>
    <name type="ordered locus">NGR_a01920</name>
    <name type="ORF">y4qF</name>
</gene>
<accession>P55627</accession>
<organism>
    <name type="scientific">Sinorhizobium fredii (strain NBRC 101917 / NGR234)</name>
    <dbReference type="NCBI Taxonomy" id="394"/>
    <lineage>
        <taxon>Bacteria</taxon>
        <taxon>Pseudomonadati</taxon>
        <taxon>Pseudomonadota</taxon>
        <taxon>Alphaproteobacteria</taxon>
        <taxon>Hyphomicrobiales</taxon>
        <taxon>Rhizobiaceae</taxon>
        <taxon>Sinorhizobium/Ensifer group</taxon>
        <taxon>Sinorhizobium</taxon>
    </lineage>
</organism>